<proteinExistence type="inferred from homology"/>
<keyword id="KW-0050">Antiport</keyword>
<keyword id="KW-0997">Cell inner membrane</keyword>
<keyword id="KW-1003">Cell membrane</keyword>
<keyword id="KW-0406">Ion transport</keyword>
<keyword id="KW-0472">Membrane</keyword>
<keyword id="KW-0915">Sodium</keyword>
<keyword id="KW-0739">Sodium transport</keyword>
<keyword id="KW-0812">Transmembrane</keyword>
<keyword id="KW-1133">Transmembrane helix</keyword>
<keyword id="KW-0813">Transport</keyword>
<accession>A7FME1</accession>
<evidence type="ECO:0000255" key="1">
    <source>
        <dbReference type="HAMAP-Rule" id="MF_01844"/>
    </source>
</evidence>
<dbReference type="EMBL" id="CP000720">
    <property type="protein sequence ID" value="ABS48792.1"/>
    <property type="molecule type" value="Genomic_DNA"/>
</dbReference>
<dbReference type="RefSeq" id="WP_012105696.1">
    <property type="nucleotide sequence ID" value="NC_009708.1"/>
</dbReference>
<dbReference type="SMR" id="A7FME1"/>
<dbReference type="KEGG" id="ypi:YpsIP31758_3464"/>
<dbReference type="HOGENOM" id="CLU_015803_1_0_6"/>
<dbReference type="Proteomes" id="UP000002412">
    <property type="component" value="Chromosome"/>
</dbReference>
<dbReference type="GO" id="GO:0005886">
    <property type="term" value="C:plasma membrane"/>
    <property type="evidence" value="ECO:0007669"/>
    <property type="project" value="UniProtKB-SubCell"/>
</dbReference>
<dbReference type="GO" id="GO:0015385">
    <property type="term" value="F:sodium:proton antiporter activity"/>
    <property type="evidence" value="ECO:0007669"/>
    <property type="project" value="TreeGrafter"/>
</dbReference>
<dbReference type="GO" id="GO:0006885">
    <property type="term" value="P:regulation of pH"/>
    <property type="evidence" value="ECO:0007669"/>
    <property type="project" value="InterPro"/>
</dbReference>
<dbReference type="Gene3D" id="1.20.1530.10">
    <property type="entry name" value="Na+/H+ antiporter like domain"/>
    <property type="match status" value="1"/>
</dbReference>
<dbReference type="HAMAP" id="MF_01844">
    <property type="entry name" value="NhaA"/>
    <property type="match status" value="1"/>
</dbReference>
<dbReference type="InterPro" id="IPR023171">
    <property type="entry name" value="Na/H_antiporter_dom_sf"/>
</dbReference>
<dbReference type="InterPro" id="IPR004670">
    <property type="entry name" value="NhaA"/>
</dbReference>
<dbReference type="NCBIfam" id="TIGR00773">
    <property type="entry name" value="NhaA"/>
    <property type="match status" value="1"/>
</dbReference>
<dbReference type="NCBIfam" id="NF007111">
    <property type="entry name" value="PRK09560.1"/>
    <property type="match status" value="1"/>
</dbReference>
<dbReference type="NCBIfam" id="NF007112">
    <property type="entry name" value="PRK09561.1"/>
    <property type="match status" value="1"/>
</dbReference>
<dbReference type="PANTHER" id="PTHR30341:SF0">
    <property type="entry name" value="NA(+)_H(+) ANTIPORTER NHAA"/>
    <property type="match status" value="1"/>
</dbReference>
<dbReference type="PANTHER" id="PTHR30341">
    <property type="entry name" value="SODIUM ION/PROTON ANTIPORTER NHAA-RELATED"/>
    <property type="match status" value="1"/>
</dbReference>
<dbReference type="Pfam" id="PF06965">
    <property type="entry name" value="Na_H_antiport_1"/>
    <property type="match status" value="1"/>
</dbReference>
<reference key="1">
    <citation type="journal article" date="2007" name="PLoS Genet.">
        <title>The complete genome sequence of Yersinia pseudotuberculosis IP31758, the causative agent of Far East scarlet-like fever.</title>
        <authorList>
            <person name="Eppinger M."/>
            <person name="Rosovitz M.J."/>
            <person name="Fricke W.F."/>
            <person name="Rasko D.A."/>
            <person name="Kokorina G."/>
            <person name="Fayolle C."/>
            <person name="Lindler L.E."/>
            <person name="Carniel E."/>
            <person name="Ravel J."/>
        </authorList>
    </citation>
    <scope>NUCLEOTIDE SEQUENCE [LARGE SCALE GENOMIC DNA]</scope>
    <source>
        <strain>IP 31758</strain>
    </source>
</reference>
<gene>
    <name evidence="1" type="primary">nhaA</name>
    <name type="ordered locus">YpsIP31758_3464</name>
</gene>
<name>NHAA_YERP3</name>
<organism>
    <name type="scientific">Yersinia pseudotuberculosis serotype O:1b (strain IP 31758)</name>
    <dbReference type="NCBI Taxonomy" id="349747"/>
    <lineage>
        <taxon>Bacteria</taxon>
        <taxon>Pseudomonadati</taxon>
        <taxon>Pseudomonadota</taxon>
        <taxon>Gammaproteobacteria</taxon>
        <taxon>Enterobacterales</taxon>
        <taxon>Yersiniaceae</taxon>
        <taxon>Yersinia</taxon>
    </lineage>
</organism>
<comment type="function">
    <text evidence="1">Na(+)/H(+) antiporter that extrudes sodium in exchange for external protons.</text>
</comment>
<comment type="catalytic activity">
    <reaction evidence="1">
        <text>Na(+)(in) + 2 H(+)(out) = Na(+)(out) + 2 H(+)(in)</text>
        <dbReference type="Rhea" id="RHEA:29251"/>
        <dbReference type="ChEBI" id="CHEBI:15378"/>
        <dbReference type="ChEBI" id="CHEBI:29101"/>
    </reaction>
    <physiologicalReaction direction="left-to-right" evidence="1">
        <dbReference type="Rhea" id="RHEA:29252"/>
    </physiologicalReaction>
</comment>
<comment type="subcellular location">
    <subcellularLocation>
        <location evidence="1">Cell inner membrane</location>
        <topology evidence="1">Multi-pass membrane protein</topology>
    </subcellularLocation>
</comment>
<comment type="similarity">
    <text evidence="1">Belongs to the NhaA Na(+)/H(+) (TC 2.A.33) antiporter family.</text>
</comment>
<protein>
    <recommendedName>
        <fullName evidence="1">Na(+)/H(+) antiporter NhaA</fullName>
    </recommendedName>
    <alternativeName>
        <fullName evidence="1">Sodium/proton antiporter NhaA</fullName>
    </alternativeName>
</protein>
<feature type="chain" id="PRO_0000334472" description="Na(+)/H(+) antiporter NhaA">
    <location>
        <begin position="1"/>
        <end position="394"/>
    </location>
</feature>
<feature type="transmembrane region" description="Helical" evidence="1">
    <location>
        <begin position="14"/>
        <end position="34"/>
    </location>
</feature>
<feature type="transmembrane region" description="Helical" evidence="1">
    <location>
        <begin position="59"/>
        <end position="79"/>
    </location>
</feature>
<feature type="transmembrane region" description="Helical" evidence="1">
    <location>
        <begin position="95"/>
        <end position="115"/>
    </location>
</feature>
<feature type="transmembrane region" description="Helical" evidence="1">
    <location>
        <begin position="125"/>
        <end position="145"/>
    </location>
</feature>
<feature type="transmembrane region" description="Helical" evidence="1">
    <location>
        <begin position="154"/>
        <end position="174"/>
    </location>
</feature>
<feature type="transmembrane region" description="Helical" evidence="1">
    <location>
        <begin position="179"/>
        <end position="199"/>
    </location>
</feature>
<feature type="transmembrane region" description="Helical" evidence="1">
    <location>
        <begin position="213"/>
        <end position="233"/>
    </location>
</feature>
<feature type="transmembrane region" description="Helical" evidence="1">
    <location>
        <begin position="254"/>
        <end position="274"/>
    </location>
</feature>
<feature type="transmembrane region" description="Helical" evidence="1">
    <location>
        <begin position="292"/>
        <end position="312"/>
    </location>
</feature>
<feature type="transmembrane region" description="Helical" evidence="1">
    <location>
        <begin position="328"/>
        <end position="348"/>
    </location>
</feature>
<feature type="transmembrane region" description="Helical" evidence="1">
    <location>
        <begin position="363"/>
        <end position="383"/>
    </location>
</feature>
<sequence length="394" mass="41686">MTNIIRQFLRQEAAGGLILIIAAAIALLMANSALQGIYQSFLDIPVSIKIASLDISKPLLLWINDGLMAVFFLVVGLEVKRELMEGSLAGRDKAVFPAIAALGGMLAPALIYLLFNGADEVTRQGWAIPAATDIAFALGVMALLGNRVPTGLKVFLLALAIIDDLGVIIIIALFYTQQVSLQSLGIAAAAIALLAYMNWRGVGKTSAYLLVGLVLWVCILKSGVHATLAGVIVGFMIPLHTQDQRSPSESLEHGLHPWVAYLILPLFAFANAGVSLQGVSLSGLTSLLPMGIATGLFIGKPLGIFTFSWLAVKLGIAKLPDAINFKQIFAVSVLCGIGFTMSIFIASLAFEGTDIALTTYSKLGILLGSTTAAVVGYSLLRLVLPARRKAVNVR</sequence>